<protein>
    <recommendedName>
        <fullName>Small delta antigen</fullName>
        <shortName>S-HDAg</shortName>
    </recommendedName>
    <alternativeName>
        <fullName>p24</fullName>
    </alternativeName>
</protein>
<reference key="1">
    <citation type="journal article" date="1990" name="J. Virol.">
        <title>Heterogeneity and evolution rates of delta virus RNA sequences.</title>
        <authorList>
            <person name="Imazeki F."/>
            <person name="Omata M."/>
            <person name="Ohto M."/>
        </authorList>
    </citation>
    <scope>NUCLEOTIDE SEQUENCE [GENOMIC RNA]</scope>
</reference>
<reference key="2">
    <citation type="journal article" date="2005" name="Acta Virol.">
        <title>Hepatitis D.</title>
        <authorList>
            <person name="Husa P."/>
            <person name="Linhartova A."/>
            <person name="Nemecek V."/>
            <person name="Husova L."/>
        </authorList>
    </citation>
    <scope>REVIEW</scope>
</reference>
<reference key="3">
    <citation type="journal article" date="2006" name="Curr. Top. Microbiol. Immunol.">
        <title>Post-translational modification of delta antigen of hepatitis D virus.</title>
        <authorList>
            <person name="Huang W.H."/>
            <person name="Chen C.W."/>
            <person name="Wu H.L."/>
            <person name="Chen P.J."/>
        </authorList>
    </citation>
    <scope>REVIEW</scope>
</reference>
<accession>P25881</accession>
<organism>
    <name type="scientific">Hepatitis delta virus genotype I (isolate Japanese M-1)</name>
    <name type="common">HDV</name>
    <dbReference type="NCBI Taxonomy" id="10424"/>
    <lineage>
        <taxon>Viruses</taxon>
        <taxon>Ribozyviria</taxon>
        <taxon>Kolmioviridae</taxon>
        <taxon>Deltavirus</taxon>
        <taxon>Hepatitis delta virus</taxon>
    </lineage>
</organism>
<name>SHDAG_HDVM1</name>
<feature type="chain" id="PRO_0000038137" description="Small delta antigen">
    <location>
        <begin position="1"/>
        <end position="195"/>
    </location>
</feature>
<feature type="domain" description="HDAg" evidence="4">
    <location>
        <begin position="20"/>
        <end position="195"/>
    </location>
</feature>
<feature type="region of interest" description="Dimerization" evidence="3">
    <location>
        <begin position="12"/>
        <end position="60"/>
    </location>
</feature>
<feature type="region of interest" description="Disordered" evidence="5">
    <location>
        <begin position="48"/>
        <end position="195"/>
    </location>
</feature>
<feature type="region of interest" description="RNA-binding" evidence="4">
    <location>
        <begin position="97"/>
        <end position="107"/>
    </location>
</feature>
<feature type="region of interest" description="RNAPII-binding" evidence="4">
    <location>
        <begin position="130"/>
        <end position="195"/>
    </location>
</feature>
<feature type="region of interest" description="RNA-binding" evidence="4">
    <location>
        <begin position="136"/>
        <end position="146"/>
    </location>
</feature>
<feature type="short sequence motif" description="Nuclear localization signal" evidence="2">
    <location>
        <begin position="66"/>
        <end position="75"/>
    </location>
</feature>
<feature type="compositionally biased region" description="Basic and acidic residues" evidence="5">
    <location>
        <begin position="94"/>
        <end position="112"/>
    </location>
</feature>
<feature type="compositionally biased region" description="Basic and acidic residues" evidence="5">
    <location>
        <begin position="129"/>
        <end position="144"/>
    </location>
</feature>
<feature type="compositionally biased region" description="Gly residues" evidence="5">
    <location>
        <begin position="158"/>
        <end position="167"/>
    </location>
</feature>
<feature type="modified residue" description="Phosphoserine; by host CK2" evidence="2">
    <location>
        <position position="2"/>
    </location>
</feature>
<feature type="modified residue" description="Omega-N-methylated arginine; by host PRMT1" evidence="2">
    <location>
        <position position="13"/>
    </location>
</feature>
<feature type="modified residue" description="N6-acetyllysine; by host" evidence="2">
    <location>
        <position position="72"/>
    </location>
</feature>
<feature type="modified residue" description="Phosphoserine; by host" evidence="2">
    <location>
        <position position="123"/>
    </location>
</feature>
<feature type="modified residue" description="Phosphoserine; by host MAPK1 and MAPK3" evidence="2">
    <location>
        <position position="177"/>
    </location>
</feature>
<feature type="modified residue" description="Phosphothreonine; by host" evidence="2">
    <location>
        <position position="182"/>
    </location>
</feature>
<comment type="function">
    <text evidence="1">Promotes both transcription and replication of genomic RNA. Following virus entry into host cell, provides nuclear import of HDV RNPs thanks to its nuclear localization signal. May interact with host RNA polymerase II thereby changing its template requirement from DNA to RNA. RNA pol II complex would then acts as an RNA-directed RNA polymerase, and transcribe and replicate HDV genome (By similarity).</text>
</comment>
<comment type="subunit">
    <text evidence="1">Homodimer. Homooctamer. Interacts with host RNA polymerase II complex, and with host NPM1.</text>
</comment>
<comment type="subcellular location">
    <subcellularLocation>
        <location>Virion</location>
    </subcellularLocation>
    <subcellularLocation>
        <location evidence="1">Host nucleus</location>
    </subcellularLocation>
</comment>
<comment type="PTM">
    <text evidence="1">Phosphorylated at serines and threonines by host MAPK1/3, PKR, and CK2.</text>
</comment>
<comment type="PTM">
    <text evidence="1">Acetylation modulates nuclear localization. Neo-synthesized genomic RNA migrates from the nucleus to the cytoplasm, where they interact with S-HDAg, which once acetylated redirect both partners to the nucleus (By similarity).</text>
</comment>
<comment type="PTM">
    <text evidence="1">Methylation plays a role in viral genome replication.</text>
</comment>
<comment type="RNA editing">
    <location>
        <position position="196" evidence="1"/>
    </location>
    <text evidence="1">Partially edited. RNA editing at this position occurs on the antigenomic strand and consists of a conversion of A to G catalyzed by the cellular enzyme ADAR1. The unedited RNA version gives rise to the small delta antigen, which ends with a nonsense codon at position 196. In the edited version, this amber codon is modified to a tryptophan codon and gives rise to the large delta antigen protein (AC P0C6L7). S-HDAg suppresses editing of non-replicating antigenomic RNA, thereby regulating the extent of editing (By similarity).</text>
</comment>
<comment type="miscellaneous">
    <text>This strain belongs to the genotype I found in North America, Europe, Africa, East and West Asia and the South Pacific.</text>
</comment>
<comment type="similarity">
    <text evidence="6">Belongs to the hepatitis delta antigen family.</text>
</comment>
<proteinExistence type="inferred from homology"/>
<dbReference type="EMBL" id="D90190">
    <property type="protein sequence ID" value="BAA14214.1"/>
    <property type="molecule type" value="Genomic_RNA"/>
</dbReference>
<dbReference type="PIR" id="A36409">
    <property type="entry name" value="SAVLDM"/>
</dbReference>
<dbReference type="SMR" id="P25881"/>
<dbReference type="Proteomes" id="UP000008108">
    <property type="component" value="Genome"/>
</dbReference>
<dbReference type="GO" id="GO:0043657">
    <property type="term" value="C:host cell"/>
    <property type="evidence" value="ECO:0007669"/>
    <property type="project" value="GOC"/>
</dbReference>
<dbReference type="GO" id="GO:0042025">
    <property type="term" value="C:host cell nucleus"/>
    <property type="evidence" value="ECO:0007669"/>
    <property type="project" value="UniProtKB-SubCell"/>
</dbReference>
<dbReference type="GO" id="GO:0044423">
    <property type="term" value="C:virion component"/>
    <property type="evidence" value="ECO:0007669"/>
    <property type="project" value="UniProtKB-KW"/>
</dbReference>
<dbReference type="GO" id="GO:0003723">
    <property type="term" value="F:RNA binding"/>
    <property type="evidence" value="ECO:0007669"/>
    <property type="project" value="UniProtKB-KW"/>
</dbReference>
<dbReference type="GO" id="GO:0046718">
    <property type="term" value="P:symbiont entry into host cell"/>
    <property type="evidence" value="ECO:0007669"/>
    <property type="project" value="UniProtKB-KW"/>
</dbReference>
<dbReference type="GO" id="GO:0075732">
    <property type="term" value="P:viral penetration into host nucleus"/>
    <property type="evidence" value="ECO:0007669"/>
    <property type="project" value="UniProtKB-KW"/>
</dbReference>
<dbReference type="Gene3D" id="4.10.220.40">
    <property type="entry name" value="Delta antigen, N-terminal"/>
    <property type="match status" value="1"/>
</dbReference>
<dbReference type="InterPro" id="IPR027403">
    <property type="entry name" value="Delta_antigen_N"/>
</dbReference>
<dbReference type="InterPro" id="IPR037517">
    <property type="entry name" value="HDAG_dom"/>
</dbReference>
<dbReference type="InterPro" id="IPR002506">
    <property type="entry name" value="HDV_ag"/>
</dbReference>
<dbReference type="Pfam" id="PF01517">
    <property type="entry name" value="HDV_ag"/>
    <property type="match status" value="1"/>
</dbReference>
<dbReference type="SUPFAM" id="SSF58108">
    <property type="entry name" value="Oligomerization domain of hepatitis delta antigen"/>
    <property type="match status" value="1"/>
</dbReference>
<dbReference type="PROSITE" id="PS51838">
    <property type="entry name" value="HDAG"/>
    <property type="match status" value="1"/>
</dbReference>
<organismHost>
    <name type="scientific">Homo sapiens</name>
    <name type="common">Human</name>
    <dbReference type="NCBI Taxonomy" id="9606"/>
</organismHost>
<evidence type="ECO:0000250" key="1"/>
<evidence type="ECO:0000250" key="2">
    <source>
        <dbReference type="UniProtKB" id="P0C6L3"/>
    </source>
</evidence>
<evidence type="ECO:0000255" key="3"/>
<evidence type="ECO:0000255" key="4">
    <source>
        <dbReference type="PROSITE-ProRule" id="PRU01183"/>
    </source>
</evidence>
<evidence type="ECO:0000256" key="5">
    <source>
        <dbReference type="SAM" id="MobiDB-lite"/>
    </source>
</evidence>
<evidence type="ECO:0000305" key="6"/>
<keyword id="KW-0007">Acetylation</keyword>
<keyword id="KW-1048">Host nucleus</keyword>
<keyword id="KW-0945">Host-virus interaction</keyword>
<keyword id="KW-0488">Methylation</keyword>
<keyword id="KW-0597">Phosphoprotein</keyword>
<keyword id="KW-0691">RNA editing</keyword>
<keyword id="KW-0694">RNA-binding</keyword>
<keyword id="KW-1163">Viral penetration into host nucleus</keyword>
<keyword id="KW-0946">Virion</keyword>
<keyword id="KW-1160">Virus entry into host cell</keyword>
<sequence>MSRSESKGKRAGREQILEQWVDGRKKLEELERDLRKIKKKIKKLEEENPWLGNVKGILGKKDKDGEGAPPAKRARTDQMEVDTGPRKRPLRGGFSDKERQDHRRRKALENKRKQLAAGGKNLSKEEEEELKRLTEEDERRERRVAGPSVGGVNPLEGGPRGAPGGGFVPNMQGVPESPFTRTGEGLDVTGNLGFP</sequence>